<feature type="signal peptide" evidence="1">
    <location>
        <begin position="1"/>
        <end position="24"/>
    </location>
</feature>
<feature type="chain" id="PRO_0000020279" description="LPS-assembly protein LptD">
    <location>
        <begin position="25"/>
        <end position="787"/>
    </location>
</feature>
<dbReference type="EMBL" id="BX950851">
    <property type="protein sequence ID" value="CAG76754.1"/>
    <property type="molecule type" value="Genomic_DNA"/>
</dbReference>
<dbReference type="RefSeq" id="WP_011095354.1">
    <property type="nucleotide sequence ID" value="NC_004547.2"/>
</dbReference>
<dbReference type="SMR" id="Q6D0E3"/>
<dbReference type="STRING" id="218491.ECA3856"/>
<dbReference type="KEGG" id="eca:ECA3856"/>
<dbReference type="PATRIC" id="fig|218491.5.peg.3911"/>
<dbReference type="eggNOG" id="COG1452">
    <property type="taxonomic scope" value="Bacteria"/>
</dbReference>
<dbReference type="HOGENOM" id="CLU_009039_2_0_6"/>
<dbReference type="OrthoDB" id="9760225at2"/>
<dbReference type="Proteomes" id="UP000007966">
    <property type="component" value="Chromosome"/>
</dbReference>
<dbReference type="GO" id="GO:0009279">
    <property type="term" value="C:cell outer membrane"/>
    <property type="evidence" value="ECO:0007669"/>
    <property type="project" value="UniProtKB-SubCell"/>
</dbReference>
<dbReference type="GO" id="GO:1990351">
    <property type="term" value="C:transporter complex"/>
    <property type="evidence" value="ECO:0007669"/>
    <property type="project" value="TreeGrafter"/>
</dbReference>
<dbReference type="GO" id="GO:0043165">
    <property type="term" value="P:Gram-negative-bacterium-type cell outer membrane assembly"/>
    <property type="evidence" value="ECO:0007669"/>
    <property type="project" value="UniProtKB-UniRule"/>
</dbReference>
<dbReference type="GO" id="GO:0015920">
    <property type="term" value="P:lipopolysaccharide transport"/>
    <property type="evidence" value="ECO:0007669"/>
    <property type="project" value="InterPro"/>
</dbReference>
<dbReference type="Gene3D" id="2.60.450.10">
    <property type="entry name" value="Lipopolysaccharide (LPS) transport protein A like domain"/>
    <property type="match status" value="1"/>
</dbReference>
<dbReference type="HAMAP" id="MF_01411">
    <property type="entry name" value="LPS_assembly_LptD"/>
    <property type="match status" value="1"/>
</dbReference>
<dbReference type="InterPro" id="IPR020889">
    <property type="entry name" value="LipoPS_assembly_LptD"/>
</dbReference>
<dbReference type="InterPro" id="IPR050218">
    <property type="entry name" value="LptD"/>
</dbReference>
<dbReference type="InterPro" id="IPR007543">
    <property type="entry name" value="LptD_C"/>
</dbReference>
<dbReference type="InterPro" id="IPR005653">
    <property type="entry name" value="OstA-like_N"/>
</dbReference>
<dbReference type="NCBIfam" id="NF002997">
    <property type="entry name" value="PRK03761.1"/>
    <property type="match status" value="1"/>
</dbReference>
<dbReference type="PANTHER" id="PTHR30189">
    <property type="entry name" value="LPS-ASSEMBLY PROTEIN"/>
    <property type="match status" value="1"/>
</dbReference>
<dbReference type="PANTHER" id="PTHR30189:SF1">
    <property type="entry name" value="LPS-ASSEMBLY PROTEIN LPTD"/>
    <property type="match status" value="1"/>
</dbReference>
<dbReference type="Pfam" id="PF04453">
    <property type="entry name" value="LptD"/>
    <property type="match status" value="1"/>
</dbReference>
<dbReference type="Pfam" id="PF03968">
    <property type="entry name" value="LptD_N"/>
    <property type="match status" value="1"/>
</dbReference>
<reference key="1">
    <citation type="journal article" date="2004" name="Proc. Natl. Acad. Sci. U.S.A.">
        <title>Genome sequence of the enterobacterial phytopathogen Erwinia carotovora subsp. atroseptica and characterization of virulence factors.</title>
        <authorList>
            <person name="Bell K.S."/>
            <person name="Sebaihia M."/>
            <person name="Pritchard L."/>
            <person name="Holden M.T.G."/>
            <person name="Hyman L.J."/>
            <person name="Holeva M.C."/>
            <person name="Thomson N.R."/>
            <person name="Bentley S.D."/>
            <person name="Churcher L.J.C."/>
            <person name="Mungall K."/>
            <person name="Atkin R."/>
            <person name="Bason N."/>
            <person name="Brooks K."/>
            <person name="Chillingworth T."/>
            <person name="Clark K."/>
            <person name="Doggett J."/>
            <person name="Fraser A."/>
            <person name="Hance Z."/>
            <person name="Hauser H."/>
            <person name="Jagels K."/>
            <person name="Moule S."/>
            <person name="Norbertczak H."/>
            <person name="Ormond D."/>
            <person name="Price C."/>
            <person name="Quail M.A."/>
            <person name="Sanders M."/>
            <person name="Walker D."/>
            <person name="Whitehead S."/>
            <person name="Salmond G.P.C."/>
            <person name="Birch P.R.J."/>
            <person name="Parkhill J."/>
            <person name="Toth I.K."/>
        </authorList>
    </citation>
    <scope>NUCLEOTIDE SEQUENCE [LARGE SCALE GENOMIC DNA]</scope>
    <source>
        <strain>SCRI 1043 / ATCC BAA-672</strain>
    </source>
</reference>
<accession>Q6D0E3</accession>
<organism>
    <name type="scientific">Pectobacterium atrosepticum (strain SCRI 1043 / ATCC BAA-672)</name>
    <name type="common">Erwinia carotovora subsp. atroseptica</name>
    <dbReference type="NCBI Taxonomy" id="218491"/>
    <lineage>
        <taxon>Bacteria</taxon>
        <taxon>Pseudomonadati</taxon>
        <taxon>Pseudomonadota</taxon>
        <taxon>Gammaproteobacteria</taxon>
        <taxon>Enterobacterales</taxon>
        <taxon>Pectobacteriaceae</taxon>
        <taxon>Pectobacterium</taxon>
    </lineage>
</organism>
<proteinExistence type="inferred from homology"/>
<evidence type="ECO:0000255" key="1">
    <source>
        <dbReference type="HAMAP-Rule" id="MF_01411"/>
    </source>
</evidence>
<protein>
    <recommendedName>
        <fullName evidence="1">LPS-assembly protein LptD</fullName>
    </recommendedName>
</protein>
<gene>
    <name evidence="1" type="primary">lptD</name>
    <name type="synonym">imp</name>
    <name type="synonym">ostA</name>
    <name type="ordered locus">ECA3856</name>
</gene>
<comment type="function">
    <text evidence="1">Together with LptE, is involved in the assembly of lipopolysaccharide (LPS) at the surface of the outer membrane.</text>
</comment>
<comment type="subunit">
    <text evidence="1">Component of the lipopolysaccharide transport and assembly complex. Interacts with LptE and LptA.</text>
</comment>
<comment type="subcellular location">
    <subcellularLocation>
        <location evidence="1">Cell outer membrane</location>
    </subcellularLocation>
</comment>
<comment type="similarity">
    <text evidence="1">Belongs to the LptD family.</text>
</comment>
<keyword id="KW-0998">Cell outer membrane</keyword>
<keyword id="KW-0472">Membrane</keyword>
<keyword id="KW-1185">Reference proteome</keyword>
<keyword id="KW-0732">Signal</keyword>
<sequence length="787" mass="89433">MKKSFPTLLATLVWSALYSQHALADLAEQCMLGVPTYNRPLVTGDPNQLPVNIQADKTEANYPDNAKFIGNVNIQQGNSIMTAEQVELSQLDPATQGSTPTRTITATGKVHYDDNQVILKGPKAWANLNTKDTDVYEGDYQMVGRQGRGSADKMKMRDSNRYTILENGSFTSCLPGDNSWSVVGSEVIQDREEQVAEIWNARFKIGGVPVFYSPYLQLPIGDKRRSGFLIPNAKYGSSNGFELLTPYYWNIAPNFDATITPHLQTKRGMQWQNEFRYLTTPGLGVIQFDWLPSDSEYAKTSQQDNNDTRWLLHWGHSGVMDQVWRFDADYTKVSDDRYFTDLDSHYGSTTDGYVTQKLSTGYANQNWNTTLSTRQFQVFSNATSRDVYRAEPQLDINYYQNDIGPVDMHLYGQAVKFTNVNDNRPEATRLHVEPTLNLPLANRWASLNTEAKLLATHYQQDNLDRYRADPTVSDVNKNALQSSVNRVMPQYKVDGKMVFEREMDWSQAYTQTLEPRAQYLYVPYRDQSSIHTYDSTLMQTDYSGLFRDRSYSGLDRIASANQIATGVTTRIYDDALVERFNASIGQIYYFDRPRTGDRNTSLDKSDNNGSQVWAGDSFLKIDDSWGVRGGLQYDNRLNEVALGDAVLEYRRDAERLVQLNYRYASPEYIRDMLPNVTNQGSQQGISQVGVTASWPIVERWAVVGAYYYDTKANQPANQLIGLQYNTCCWAVSVGYERKITDWNSASRSSEYDNKVSFNIELRGLSSNYGLGSDKMLRSGILPYQRAF</sequence>
<name>LPTD_PECAS</name>